<reference key="1">
    <citation type="journal article" date="2008" name="Genomics">
        <title>Characterization of ST-4821 complex, a unique Neisseria meningitidis clone.</title>
        <authorList>
            <person name="Peng J."/>
            <person name="Yang L."/>
            <person name="Yang F."/>
            <person name="Yang J."/>
            <person name="Yan Y."/>
            <person name="Nie H."/>
            <person name="Zhang X."/>
            <person name="Xiong Z."/>
            <person name="Jiang Y."/>
            <person name="Cheng F."/>
            <person name="Xu X."/>
            <person name="Chen S."/>
            <person name="Sun L."/>
            <person name="Li W."/>
            <person name="Shen Y."/>
            <person name="Shao Z."/>
            <person name="Liang X."/>
            <person name="Xu J."/>
            <person name="Jin Q."/>
        </authorList>
    </citation>
    <scope>NUCLEOTIDE SEQUENCE [LARGE SCALE GENOMIC DNA]</scope>
    <source>
        <strain>053442</strain>
    </source>
</reference>
<accession>A9LZF7</accession>
<organism>
    <name type="scientific">Neisseria meningitidis serogroup C (strain 053442)</name>
    <dbReference type="NCBI Taxonomy" id="374833"/>
    <lineage>
        <taxon>Bacteria</taxon>
        <taxon>Pseudomonadati</taxon>
        <taxon>Pseudomonadota</taxon>
        <taxon>Betaproteobacteria</taxon>
        <taxon>Neisseriales</taxon>
        <taxon>Neisseriaceae</taxon>
        <taxon>Neisseria</taxon>
    </lineage>
</organism>
<evidence type="ECO:0000255" key="1">
    <source>
        <dbReference type="HAMAP-Rule" id="MF_01026"/>
    </source>
</evidence>
<gene>
    <name evidence="1" type="primary">leuC</name>
    <name type="ordered locus">NMCC_1159</name>
</gene>
<protein>
    <recommendedName>
        <fullName evidence="1">3-isopropylmalate dehydratase large subunit</fullName>
        <ecNumber evidence="1">4.2.1.33</ecNumber>
    </recommendedName>
    <alternativeName>
        <fullName evidence="1">Alpha-IPM isomerase</fullName>
        <shortName evidence="1">IPMI</shortName>
    </alternativeName>
    <alternativeName>
        <fullName evidence="1">Isopropylmalate isomerase</fullName>
    </alternativeName>
</protein>
<keyword id="KW-0004">4Fe-4S</keyword>
<keyword id="KW-0028">Amino-acid biosynthesis</keyword>
<keyword id="KW-0100">Branched-chain amino acid biosynthesis</keyword>
<keyword id="KW-0408">Iron</keyword>
<keyword id="KW-0411">Iron-sulfur</keyword>
<keyword id="KW-0432">Leucine biosynthesis</keyword>
<keyword id="KW-0456">Lyase</keyword>
<keyword id="KW-0479">Metal-binding</keyword>
<feature type="chain" id="PRO_1000084218" description="3-isopropylmalate dehydratase large subunit">
    <location>
        <begin position="1"/>
        <end position="469"/>
    </location>
</feature>
<feature type="binding site" evidence="1">
    <location>
        <position position="349"/>
    </location>
    <ligand>
        <name>[4Fe-4S] cluster</name>
        <dbReference type="ChEBI" id="CHEBI:49883"/>
    </ligand>
</feature>
<feature type="binding site" evidence="1">
    <location>
        <position position="410"/>
    </location>
    <ligand>
        <name>[4Fe-4S] cluster</name>
        <dbReference type="ChEBI" id="CHEBI:49883"/>
    </ligand>
</feature>
<feature type="binding site" evidence="1">
    <location>
        <position position="413"/>
    </location>
    <ligand>
        <name>[4Fe-4S] cluster</name>
        <dbReference type="ChEBI" id="CHEBI:49883"/>
    </ligand>
</feature>
<dbReference type="EC" id="4.2.1.33" evidence="1"/>
<dbReference type="EMBL" id="CP000381">
    <property type="protein sequence ID" value="ABX73333.1"/>
    <property type="molecule type" value="Genomic_DNA"/>
</dbReference>
<dbReference type="RefSeq" id="WP_012221696.1">
    <property type="nucleotide sequence ID" value="NC_010120.1"/>
</dbReference>
<dbReference type="SMR" id="A9LZF7"/>
<dbReference type="KEGG" id="nmn:NMCC_1159"/>
<dbReference type="HOGENOM" id="CLU_006714_3_4_4"/>
<dbReference type="UniPathway" id="UPA00048">
    <property type="reaction ID" value="UER00071"/>
</dbReference>
<dbReference type="Proteomes" id="UP000001177">
    <property type="component" value="Chromosome"/>
</dbReference>
<dbReference type="GO" id="GO:0003861">
    <property type="term" value="F:3-isopropylmalate dehydratase activity"/>
    <property type="evidence" value="ECO:0007669"/>
    <property type="project" value="UniProtKB-UniRule"/>
</dbReference>
<dbReference type="GO" id="GO:0051539">
    <property type="term" value="F:4 iron, 4 sulfur cluster binding"/>
    <property type="evidence" value="ECO:0007669"/>
    <property type="project" value="UniProtKB-KW"/>
</dbReference>
<dbReference type="GO" id="GO:0046872">
    <property type="term" value="F:metal ion binding"/>
    <property type="evidence" value="ECO:0007669"/>
    <property type="project" value="UniProtKB-KW"/>
</dbReference>
<dbReference type="GO" id="GO:0009098">
    <property type="term" value="P:L-leucine biosynthetic process"/>
    <property type="evidence" value="ECO:0007669"/>
    <property type="project" value="UniProtKB-UniRule"/>
</dbReference>
<dbReference type="CDD" id="cd01583">
    <property type="entry name" value="IPMI"/>
    <property type="match status" value="1"/>
</dbReference>
<dbReference type="FunFam" id="3.30.499.10:FF:000007">
    <property type="entry name" value="3-isopropylmalate dehydratase large subunit"/>
    <property type="match status" value="1"/>
</dbReference>
<dbReference type="Gene3D" id="3.30.499.10">
    <property type="entry name" value="Aconitase, domain 3"/>
    <property type="match status" value="2"/>
</dbReference>
<dbReference type="HAMAP" id="MF_01026">
    <property type="entry name" value="LeuC_type1"/>
    <property type="match status" value="1"/>
</dbReference>
<dbReference type="InterPro" id="IPR004430">
    <property type="entry name" value="3-IsopropMal_deHydase_lsu"/>
</dbReference>
<dbReference type="InterPro" id="IPR015931">
    <property type="entry name" value="Acnase/IPM_dHydase_lsu_aba_1/3"/>
</dbReference>
<dbReference type="InterPro" id="IPR001030">
    <property type="entry name" value="Acoase/IPM_deHydtase_lsu_aba"/>
</dbReference>
<dbReference type="InterPro" id="IPR018136">
    <property type="entry name" value="Aconitase_4Fe-4S_BS"/>
</dbReference>
<dbReference type="InterPro" id="IPR036008">
    <property type="entry name" value="Aconitase_4Fe-4S_dom"/>
</dbReference>
<dbReference type="InterPro" id="IPR050067">
    <property type="entry name" value="IPM_dehydratase_rel_enz"/>
</dbReference>
<dbReference type="InterPro" id="IPR033941">
    <property type="entry name" value="IPMI_cat"/>
</dbReference>
<dbReference type="NCBIfam" id="TIGR00170">
    <property type="entry name" value="leuC"/>
    <property type="match status" value="1"/>
</dbReference>
<dbReference type="NCBIfam" id="NF004016">
    <property type="entry name" value="PRK05478.1"/>
    <property type="match status" value="1"/>
</dbReference>
<dbReference type="NCBIfam" id="NF009116">
    <property type="entry name" value="PRK12466.1"/>
    <property type="match status" value="1"/>
</dbReference>
<dbReference type="PANTHER" id="PTHR43822:SF9">
    <property type="entry name" value="3-ISOPROPYLMALATE DEHYDRATASE"/>
    <property type="match status" value="1"/>
</dbReference>
<dbReference type="PANTHER" id="PTHR43822">
    <property type="entry name" value="HOMOACONITASE, MITOCHONDRIAL-RELATED"/>
    <property type="match status" value="1"/>
</dbReference>
<dbReference type="Pfam" id="PF00330">
    <property type="entry name" value="Aconitase"/>
    <property type="match status" value="1"/>
</dbReference>
<dbReference type="PRINTS" id="PR00415">
    <property type="entry name" value="ACONITASE"/>
</dbReference>
<dbReference type="SUPFAM" id="SSF53732">
    <property type="entry name" value="Aconitase iron-sulfur domain"/>
    <property type="match status" value="1"/>
</dbReference>
<dbReference type="PROSITE" id="PS00450">
    <property type="entry name" value="ACONITASE_1"/>
    <property type="match status" value="1"/>
</dbReference>
<dbReference type="PROSITE" id="PS01244">
    <property type="entry name" value="ACONITASE_2"/>
    <property type="match status" value="1"/>
</dbReference>
<comment type="function">
    <text evidence="1">Catalyzes the isomerization between 2-isopropylmalate and 3-isopropylmalate, via the formation of 2-isopropylmaleate.</text>
</comment>
<comment type="catalytic activity">
    <reaction evidence="1">
        <text>(2R,3S)-3-isopropylmalate = (2S)-2-isopropylmalate</text>
        <dbReference type="Rhea" id="RHEA:32287"/>
        <dbReference type="ChEBI" id="CHEBI:1178"/>
        <dbReference type="ChEBI" id="CHEBI:35121"/>
        <dbReference type="EC" id="4.2.1.33"/>
    </reaction>
</comment>
<comment type="cofactor">
    <cofactor evidence="1">
        <name>[4Fe-4S] cluster</name>
        <dbReference type="ChEBI" id="CHEBI:49883"/>
    </cofactor>
    <text evidence="1">Binds 1 [4Fe-4S] cluster per subunit.</text>
</comment>
<comment type="pathway">
    <text evidence="1">Amino-acid biosynthesis; L-leucine biosynthesis; L-leucine from 3-methyl-2-oxobutanoate: step 2/4.</text>
</comment>
<comment type="subunit">
    <text evidence="1">Heterodimer of LeuC and LeuD.</text>
</comment>
<comment type="similarity">
    <text evidence="1">Belongs to the aconitase/IPM isomerase family. LeuC type 1 subfamily.</text>
</comment>
<proteinExistence type="inferred from homology"/>
<sequence length="469" mass="50836">MTAQTLYDKLWNNHVVREEEDGTVLLYIDRHLVHEVTSPQAFEGLKMAGRKLWRIDSVVSTADHNTPTGDWDKGIQDPISKLQVDILDKNIKEFGALAYFPFMDKGQGIVHVMGPEQGATLPGMTVVCGDSHTSTHGAFGALAHGIGTSEVEHTMATQCITAKKSKSMLIAVDGKLKAGVTAKDVALYIIGQIGTAGGTGYAIEFGGEAIRSLSMEGRMTLCNMAIEAGARSGMVAVDQTTIDYVKDKPFAPKGEAWDKAVEYWRTLVSDEGAVFDKEYRFNAEDIEPQVTWGTSPEMVLDISSKVPNPAEETDPVKRSGMERALEYMGLEAGTPLNEIPVDIVFIGSCTNSRIEDLREAAAIAKDRKKAANVQRVLIVPGSGLVKEQAEKEGLDKIFIEAGFEWREPGCSMCLAMNADRLTPGQRCASTSNRNFEGRQGNGGRTHLVSPAMAAAAAVTGRFTDIRMMA</sequence>
<name>LEUC_NEIM0</name>